<comment type="function">
    <text evidence="1">Promotes RNA polymerase assembly. Latches the N- and C-terminal regions of the beta' subunit thereby facilitating its interaction with the beta and alpha subunits.</text>
</comment>
<comment type="catalytic activity">
    <reaction evidence="1">
        <text>RNA(n) + a ribonucleoside 5'-triphosphate = RNA(n+1) + diphosphate</text>
        <dbReference type="Rhea" id="RHEA:21248"/>
        <dbReference type="Rhea" id="RHEA-COMP:14527"/>
        <dbReference type="Rhea" id="RHEA-COMP:17342"/>
        <dbReference type="ChEBI" id="CHEBI:33019"/>
        <dbReference type="ChEBI" id="CHEBI:61557"/>
        <dbReference type="ChEBI" id="CHEBI:140395"/>
        <dbReference type="EC" id="2.7.7.6"/>
    </reaction>
</comment>
<comment type="subunit">
    <text evidence="1">The RNAP catalytic core consists of 2 alpha, 1 beta, 1 beta' and 1 omega subunit. When a sigma factor is associated with the core the holoenzyme is formed, which can initiate transcription.</text>
</comment>
<comment type="similarity">
    <text evidence="1">Belongs to the RNA polymerase subunit omega family.</text>
</comment>
<organism>
    <name type="scientific">Bartonella bacilliformis (strain ATCC 35685 / KC583 / Herrer 020/F12,63)</name>
    <dbReference type="NCBI Taxonomy" id="360095"/>
    <lineage>
        <taxon>Bacteria</taxon>
        <taxon>Pseudomonadati</taxon>
        <taxon>Pseudomonadota</taxon>
        <taxon>Alphaproteobacteria</taxon>
        <taxon>Hyphomicrobiales</taxon>
        <taxon>Bartonellaceae</taxon>
        <taxon>Bartonella</taxon>
    </lineage>
</organism>
<gene>
    <name evidence="1" type="primary">rpoZ</name>
    <name type="ordered locus">BARBAKC583_0467</name>
</gene>
<protein>
    <recommendedName>
        <fullName evidence="1">DNA-directed RNA polymerase subunit omega</fullName>
        <shortName evidence="1">RNAP omega subunit</shortName>
        <ecNumber evidence="1">2.7.7.6</ecNumber>
    </recommendedName>
    <alternativeName>
        <fullName evidence="1">RNA polymerase omega subunit</fullName>
    </alternativeName>
    <alternativeName>
        <fullName evidence="1">Transcriptase subunit omega</fullName>
    </alternativeName>
</protein>
<sequence>MARVTVEDCIDKVDNRFELVLLAGHRARQISQGAQITVSRDNDKNPVVALREIADETLSPADLKEDLIHSLQKHVEVDEPEAVTEFISHSSETESVLDTSREEENCSFDYMSEEDLLAGIEGLVVPEKSDDY</sequence>
<name>RPOZ_BARBK</name>
<proteinExistence type="inferred from homology"/>
<dbReference type="EC" id="2.7.7.6" evidence="1"/>
<dbReference type="EMBL" id="CP000524">
    <property type="protein sequence ID" value="ABM44936.1"/>
    <property type="molecule type" value="Genomic_DNA"/>
</dbReference>
<dbReference type="RefSeq" id="WP_005766532.1">
    <property type="nucleotide sequence ID" value="NC_008783.1"/>
</dbReference>
<dbReference type="SMR" id="A1US30"/>
<dbReference type="STRING" id="360095.BARBAKC583_0467"/>
<dbReference type="GeneID" id="4684143"/>
<dbReference type="KEGG" id="bbk:BARBAKC583_0467"/>
<dbReference type="PATRIC" id="fig|360095.6.peg.449"/>
<dbReference type="eggNOG" id="COG1758">
    <property type="taxonomic scope" value="Bacteria"/>
</dbReference>
<dbReference type="HOGENOM" id="CLU_125406_2_0_5"/>
<dbReference type="OrthoDB" id="9796300at2"/>
<dbReference type="Proteomes" id="UP000000643">
    <property type="component" value="Chromosome"/>
</dbReference>
<dbReference type="GO" id="GO:0000428">
    <property type="term" value="C:DNA-directed RNA polymerase complex"/>
    <property type="evidence" value="ECO:0007669"/>
    <property type="project" value="UniProtKB-KW"/>
</dbReference>
<dbReference type="GO" id="GO:0003677">
    <property type="term" value="F:DNA binding"/>
    <property type="evidence" value="ECO:0007669"/>
    <property type="project" value="UniProtKB-UniRule"/>
</dbReference>
<dbReference type="GO" id="GO:0003899">
    <property type="term" value="F:DNA-directed RNA polymerase activity"/>
    <property type="evidence" value="ECO:0007669"/>
    <property type="project" value="UniProtKB-UniRule"/>
</dbReference>
<dbReference type="GO" id="GO:0006351">
    <property type="term" value="P:DNA-templated transcription"/>
    <property type="evidence" value="ECO:0007669"/>
    <property type="project" value="UniProtKB-UniRule"/>
</dbReference>
<dbReference type="Gene3D" id="3.90.940.10">
    <property type="match status" value="1"/>
</dbReference>
<dbReference type="HAMAP" id="MF_00366">
    <property type="entry name" value="RNApol_bact_RpoZ"/>
    <property type="match status" value="1"/>
</dbReference>
<dbReference type="InterPro" id="IPR003716">
    <property type="entry name" value="DNA-dir_RNA_pol_omega"/>
</dbReference>
<dbReference type="InterPro" id="IPR006110">
    <property type="entry name" value="Pol_omega/Rpo6/RPB6"/>
</dbReference>
<dbReference type="InterPro" id="IPR036161">
    <property type="entry name" value="RPB6/omega-like_sf"/>
</dbReference>
<dbReference type="NCBIfam" id="TIGR00690">
    <property type="entry name" value="rpoZ"/>
    <property type="match status" value="1"/>
</dbReference>
<dbReference type="PANTHER" id="PTHR34476">
    <property type="entry name" value="DNA-DIRECTED RNA POLYMERASE SUBUNIT OMEGA"/>
    <property type="match status" value="1"/>
</dbReference>
<dbReference type="PANTHER" id="PTHR34476:SF1">
    <property type="entry name" value="DNA-DIRECTED RNA POLYMERASE SUBUNIT OMEGA"/>
    <property type="match status" value="1"/>
</dbReference>
<dbReference type="Pfam" id="PF01192">
    <property type="entry name" value="RNA_pol_Rpb6"/>
    <property type="match status" value="1"/>
</dbReference>
<dbReference type="SMART" id="SM01409">
    <property type="entry name" value="RNA_pol_Rpb6"/>
    <property type="match status" value="1"/>
</dbReference>
<dbReference type="SUPFAM" id="SSF63562">
    <property type="entry name" value="RPB6/omega subunit-like"/>
    <property type="match status" value="1"/>
</dbReference>
<accession>A1US30</accession>
<reference key="1">
    <citation type="submission" date="2006-12" db="EMBL/GenBank/DDBJ databases">
        <authorList>
            <person name="Hendrix L."/>
            <person name="Mohamoud Y."/>
            <person name="Radune D."/>
            <person name="Shvartsbeyn A."/>
            <person name="Daugherty S."/>
            <person name="Dodson R."/>
            <person name="Durkin A.S."/>
            <person name="Harkins D."/>
            <person name="Huot H."/>
            <person name="Kothari S.P."/>
            <person name="Madupu R."/>
            <person name="Li J."/>
            <person name="Nelson W.C."/>
            <person name="Shrivastava S."/>
            <person name="Giglio M.G."/>
            <person name="Haft D."/>
            <person name="Selengut J."/>
            <person name="Fraser-Ligget C."/>
            <person name="Seshadri R."/>
        </authorList>
    </citation>
    <scope>NUCLEOTIDE SEQUENCE [LARGE SCALE GENOMIC DNA]</scope>
    <source>
        <strain>ATCC 35685 / KC583 / Herrer 020/F12,63</strain>
    </source>
</reference>
<keyword id="KW-0240">DNA-directed RNA polymerase</keyword>
<keyword id="KW-0548">Nucleotidyltransferase</keyword>
<keyword id="KW-0804">Transcription</keyword>
<keyword id="KW-0808">Transferase</keyword>
<feature type="chain" id="PRO_1000005890" description="DNA-directed RNA polymerase subunit omega">
    <location>
        <begin position="1"/>
        <end position="132"/>
    </location>
</feature>
<evidence type="ECO:0000255" key="1">
    <source>
        <dbReference type="HAMAP-Rule" id="MF_00366"/>
    </source>
</evidence>